<accession>Q3AV45</accession>
<comment type="function">
    <text evidence="1">Binds 16S rRNA, required for the assembly of 30S particles and may also be responsible for determining the conformation of the 16S rRNA at the A site.</text>
</comment>
<comment type="subunit">
    <text evidence="1">Part of the 30S ribosomal subunit. Contacts proteins S3 and S10.</text>
</comment>
<comment type="similarity">
    <text evidence="1">Belongs to the universal ribosomal protein uS14 family.</text>
</comment>
<protein>
    <recommendedName>
        <fullName evidence="1">Small ribosomal subunit protein uS14</fullName>
    </recommendedName>
    <alternativeName>
        <fullName evidence="2">30S ribosomal protein S14</fullName>
    </alternativeName>
</protein>
<keyword id="KW-1185">Reference proteome</keyword>
<keyword id="KW-0687">Ribonucleoprotein</keyword>
<keyword id="KW-0689">Ribosomal protein</keyword>
<keyword id="KW-0694">RNA-binding</keyword>
<keyword id="KW-0699">rRNA-binding</keyword>
<evidence type="ECO:0000255" key="1">
    <source>
        <dbReference type="HAMAP-Rule" id="MF_00537"/>
    </source>
</evidence>
<evidence type="ECO:0000305" key="2"/>
<reference key="1">
    <citation type="submission" date="2005-08" db="EMBL/GenBank/DDBJ databases">
        <title>Complete sequence of Synechococcus sp. CC9902.</title>
        <authorList>
            <person name="Copeland A."/>
            <person name="Lucas S."/>
            <person name="Lapidus A."/>
            <person name="Barry K."/>
            <person name="Detter J.C."/>
            <person name="Glavina T."/>
            <person name="Hammon N."/>
            <person name="Israni S."/>
            <person name="Pitluck S."/>
            <person name="Martinez M."/>
            <person name="Schmutz J."/>
            <person name="Larimer F."/>
            <person name="Land M."/>
            <person name="Kyrpides N."/>
            <person name="Ivanova N."/>
            <person name="Richardson P."/>
        </authorList>
    </citation>
    <scope>NUCLEOTIDE SEQUENCE [LARGE SCALE GENOMIC DNA]</scope>
    <source>
        <strain>CC9902</strain>
    </source>
</reference>
<sequence>MAKKSMIARDVKRKKMAERYAAKRSALMAAFNSAADPMSRLEIHRKIQALPRNSAPTRIRNRCWATGKPRGVYRDFGLCRNQLRERAHKGELPGVVKSSW</sequence>
<proteinExistence type="inferred from homology"/>
<gene>
    <name evidence="1" type="primary">rpsN</name>
    <name evidence="1" type="synonym">rps14</name>
    <name type="ordered locus">Syncc9902_1793</name>
</gene>
<organism>
    <name type="scientific">Synechococcus sp. (strain CC9902)</name>
    <dbReference type="NCBI Taxonomy" id="316279"/>
    <lineage>
        <taxon>Bacteria</taxon>
        <taxon>Bacillati</taxon>
        <taxon>Cyanobacteriota</taxon>
        <taxon>Cyanophyceae</taxon>
        <taxon>Synechococcales</taxon>
        <taxon>Synechococcaceae</taxon>
        <taxon>Synechococcus</taxon>
    </lineage>
</organism>
<feature type="chain" id="PRO_1000128618" description="Small ribosomal subunit protein uS14">
    <location>
        <begin position="1"/>
        <end position="100"/>
    </location>
</feature>
<dbReference type="EMBL" id="CP000097">
    <property type="protein sequence ID" value="ABB26750.1"/>
    <property type="molecule type" value="Genomic_DNA"/>
</dbReference>
<dbReference type="RefSeq" id="WP_011360556.1">
    <property type="nucleotide sequence ID" value="NC_007513.1"/>
</dbReference>
<dbReference type="SMR" id="Q3AV45"/>
<dbReference type="STRING" id="316279.Syncc9902_1793"/>
<dbReference type="KEGG" id="sye:Syncc9902_1793"/>
<dbReference type="eggNOG" id="COG0199">
    <property type="taxonomic scope" value="Bacteria"/>
</dbReference>
<dbReference type="HOGENOM" id="CLU_139869_0_1_3"/>
<dbReference type="OrthoDB" id="9810484at2"/>
<dbReference type="Proteomes" id="UP000002712">
    <property type="component" value="Chromosome"/>
</dbReference>
<dbReference type="GO" id="GO:0005737">
    <property type="term" value="C:cytoplasm"/>
    <property type="evidence" value="ECO:0007669"/>
    <property type="project" value="UniProtKB-ARBA"/>
</dbReference>
<dbReference type="GO" id="GO:0015935">
    <property type="term" value="C:small ribosomal subunit"/>
    <property type="evidence" value="ECO:0007669"/>
    <property type="project" value="TreeGrafter"/>
</dbReference>
<dbReference type="GO" id="GO:0019843">
    <property type="term" value="F:rRNA binding"/>
    <property type="evidence" value="ECO:0007669"/>
    <property type="project" value="UniProtKB-UniRule"/>
</dbReference>
<dbReference type="GO" id="GO:0003735">
    <property type="term" value="F:structural constituent of ribosome"/>
    <property type="evidence" value="ECO:0007669"/>
    <property type="project" value="InterPro"/>
</dbReference>
<dbReference type="GO" id="GO:0006412">
    <property type="term" value="P:translation"/>
    <property type="evidence" value="ECO:0007669"/>
    <property type="project" value="UniProtKB-UniRule"/>
</dbReference>
<dbReference type="FunFam" id="1.10.287.1480:FF:000001">
    <property type="entry name" value="30S ribosomal protein S14"/>
    <property type="match status" value="1"/>
</dbReference>
<dbReference type="Gene3D" id="1.10.287.1480">
    <property type="match status" value="1"/>
</dbReference>
<dbReference type="HAMAP" id="MF_00537">
    <property type="entry name" value="Ribosomal_uS14_1"/>
    <property type="match status" value="1"/>
</dbReference>
<dbReference type="InterPro" id="IPR001209">
    <property type="entry name" value="Ribosomal_uS14"/>
</dbReference>
<dbReference type="InterPro" id="IPR023036">
    <property type="entry name" value="Ribosomal_uS14_bac/plastid"/>
</dbReference>
<dbReference type="InterPro" id="IPR018271">
    <property type="entry name" value="Ribosomal_uS14_CS"/>
</dbReference>
<dbReference type="NCBIfam" id="NF006477">
    <property type="entry name" value="PRK08881.1"/>
    <property type="match status" value="1"/>
</dbReference>
<dbReference type="PANTHER" id="PTHR19836">
    <property type="entry name" value="30S RIBOSOMAL PROTEIN S14"/>
    <property type="match status" value="1"/>
</dbReference>
<dbReference type="PANTHER" id="PTHR19836:SF19">
    <property type="entry name" value="SMALL RIBOSOMAL SUBUNIT PROTEIN US14M"/>
    <property type="match status" value="1"/>
</dbReference>
<dbReference type="Pfam" id="PF00253">
    <property type="entry name" value="Ribosomal_S14"/>
    <property type="match status" value="1"/>
</dbReference>
<dbReference type="SUPFAM" id="SSF57716">
    <property type="entry name" value="Glucocorticoid receptor-like (DNA-binding domain)"/>
    <property type="match status" value="1"/>
</dbReference>
<dbReference type="PROSITE" id="PS00527">
    <property type="entry name" value="RIBOSOMAL_S14"/>
    <property type="match status" value="1"/>
</dbReference>
<name>RS14_SYNS9</name>